<feature type="chain" id="PRO_0000391887" description="E3 UFM1-protein ligase 1 homolog">
    <location>
        <begin position="1"/>
        <end position="782"/>
    </location>
</feature>
<feature type="region of interest" description="Disordered" evidence="2">
    <location>
        <begin position="405"/>
        <end position="478"/>
    </location>
</feature>
<dbReference type="EC" id="2.3.2.-"/>
<dbReference type="EMBL" id="CM000364">
    <property type="protein sequence ID" value="EDX11933.1"/>
    <property type="molecule type" value="Genomic_DNA"/>
</dbReference>
<dbReference type="SMR" id="B4QYZ3"/>
<dbReference type="STRING" id="7240.B4QYZ3"/>
<dbReference type="EnsemblMetazoa" id="FBtr0219421">
    <property type="protein sequence ID" value="FBpp0217913"/>
    <property type="gene ID" value="FBgn0191007"/>
</dbReference>
<dbReference type="EnsemblMetazoa" id="XM_002102394.4">
    <property type="protein sequence ID" value="XP_002102430.1"/>
    <property type="gene ID" value="LOC6727032"/>
</dbReference>
<dbReference type="GeneID" id="6727032"/>
<dbReference type="KEGG" id="dsi:Dsimw501_GD19511"/>
<dbReference type="CTD" id="23376"/>
<dbReference type="HOGENOM" id="CLU_012417_1_1_1"/>
<dbReference type="OMA" id="CILHASG"/>
<dbReference type="OrthoDB" id="10258297at2759"/>
<dbReference type="PhylomeDB" id="B4QYZ3"/>
<dbReference type="Proteomes" id="UP000000304">
    <property type="component" value="Chromosome 3R"/>
</dbReference>
<dbReference type="Bgee" id="FBgn0191007">
    <property type="expression patterns" value="Expressed in embryo and 3 other cell types or tissues"/>
</dbReference>
<dbReference type="GO" id="GO:0005789">
    <property type="term" value="C:endoplasmic reticulum membrane"/>
    <property type="evidence" value="ECO:0007669"/>
    <property type="project" value="TreeGrafter"/>
</dbReference>
<dbReference type="GO" id="GO:0061666">
    <property type="term" value="F:UFM1 ligase activity"/>
    <property type="evidence" value="ECO:0007669"/>
    <property type="project" value="EnsemblMetazoa"/>
</dbReference>
<dbReference type="GO" id="GO:1990592">
    <property type="term" value="P:protein K69-linked ufmylation"/>
    <property type="evidence" value="ECO:0007669"/>
    <property type="project" value="TreeGrafter"/>
</dbReference>
<dbReference type="GO" id="GO:0032434">
    <property type="term" value="P:regulation of proteasomal ubiquitin-dependent protein catabolic process"/>
    <property type="evidence" value="ECO:0007669"/>
    <property type="project" value="TreeGrafter"/>
</dbReference>
<dbReference type="GO" id="GO:0034976">
    <property type="term" value="P:response to endoplasmic reticulum stress"/>
    <property type="evidence" value="ECO:0007669"/>
    <property type="project" value="TreeGrafter"/>
</dbReference>
<dbReference type="InterPro" id="IPR018611">
    <property type="entry name" value="Ufl1"/>
</dbReference>
<dbReference type="InterPro" id="IPR056761">
    <property type="entry name" value="Ufl1-like_C"/>
</dbReference>
<dbReference type="InterPro" id="IPR056580">
    <property type="entry name" value="Ufl1_dom"/>
</dbReference>
<dbReference type="InterPro" id="IPR056579">
    <property type="entry name" value="Ufl1_N"/>
</dbReference>
<dbReference type="PANTHER" id="PTHR31057">
    <property type="entry name" value="E3 UFM1-PROTEIN LIGASE 1"/>
    <property type="match status" value="1"/>
</dbReference>
<dbReference type="PANTHER" id="PTHR31057:SF0">
    <property type="entry name" value="E3 UFM1-PROTEIN LIGASE 1"/>
    <property type="match status" value="1"/>
</dbReference>
<dbReference type="Pfam" id="PF09743">
    <property type="entry name" value="E3_UFM1_ligase"/>
    <property type="match status" value="1"/>
</dbReference>
<dbReference type="Pfam" id="PF23659">
    <property type="entry name" value="UFL1"/>
    <property type="match status" value="1"/>
</dbReference>
<dbReference type="Pfam" id="PF25041">
    <property type="entry name" value="UFL1_C"/>
    <property type="match status" value="1"/>
</dbReference>
<protein>
    <recommendedName>
        <fullName>E3 UFM1-protein ligase 1 homolog</fullName>
        <ecNumber>2.3.2.-</ecNumber>
    </recommendedName>
    <alternativeName>
        <fullName evidence="3">E3 UFM1-protein transferase 1 homolog</fullName>
    </alternativeName>
</protein>
<sequence>MGSDWDEIKRLAADFQKAQLTSTLQKLSERNCVEIVTLLLEKQMLEVVFTNDGKEYITPDHLEREIQDELYVNGGRANLVEVSKTLNVDLSRIEVLAERIAAENPSVHLVLGQLIDEDYISHIAQEINEKLVQRGEISISELASQFDLPSDFLQHDVVEKHLGKIIKGRQDASNPRVFFTQAYIQRCKAKIRGALAAITRPINVAVILQQIGVQEKIFHSLLDEIAPAGQVTSKQANSQYVPHIYAKTQADWVNSFYKQNSFLEYDAIQKLGISDAKSYIRKQFPNEEFLFLKRVALGARLVELTVVTALNECSATKQYLDLTTILPSNLSEEDIEEVFSTIMAQKHSNPSNFVYLDGIVFSQPYLAQLVQPCQALAESQAKAAIDGGVYQQYIVEKTLAQKGNVSTQELEDDGKVDKRDERRKKASSGKAGGGAQGRETKTKSTKKHQRGKAAAQFDSDDEDDVQQGTRGGGGASKKAVKPLELVKTADIVKLITASLEEEGLEHLSKPIAALYTNQFNQTALARAQELFEATPQTNRRQTHAAIQDRINTLLIDIRLYEKGLKLFPQDTQTQLVKYLLKSLGNEICNELSLYVASECNLTVKNTNLNVDQRNKLAQECEAQYRAALLEQNKALNKSIDEFELATETVLKTCSMIIKKVDKKKDRLLIADHKRKLQKQLLECHEPALLLHLAALILFTTITGSILHASGKFVSAILQHIRGSLNEEQNALLLRYHDLVLQVLQATPDSNESKLANEHLQAMQTQVVELAQNFSRASVSKAD</sequence>
<keyword id="KW-1185">Reference proteome</keyword>
<keyword id="KW-0808">Transferase</keyword>
<keyword id="KW-0833">Ubl conjugation pathway</keyword>
<comment type="function">
    <text evidence="1">E3 UFM1-protein ligase that mediates ufmylation of target proteins.</text>
</comment>
<comment type="similarity">
    <text evidence="3">Belongs to the UFL1 family.</text>
</comment>
<gene>
    <name type="ORF">GD19511</name>
</gene>
<reference key="1">
    <citation type="journal article" date="2007" name="Nature">
        <title>Evolution of genes and genomes on the Drosophila phylogeny.</title>
        <authorList>
            <consortium name="Drosophila 12 genomes consortium"/>
        </authorList>
    </citation>
    <scope>NUCLEOTIDE SEQUENCE [LARGE SCALE GENOMIC DNA]</scope>
</reference>
<organism>
    <name type="scientific">Drosophila simulans</name>
    <name type="common">Fruit fly</name>
    <dbReference type="NCBI Taxonomy" id="7240"/>
    <lineage>
        <taxon>Eukaryota</taxon>
        <taxon>Metazoa</taxon>
        <taxon>Ecdysozoa</taxon>
        <taxon>Arthropoda</taxon>
        <taxon>Hexapoda</taxon>
        <taxon>Insecta</taxon>
        <taxon>Pterygota</taxon>
        <taxon>Neoptera</taxon>
        <taxon>Endopterygota</taxon>
        <taxon>Diptera</taxon>
        <taxon>Brachycera</taxon>
        <taxon>Muscomorpha</taxon>
        <taxon>Ephydroidea</taxon>
        <taxon>Drosophilidae</taxon>
        <taxon>Drosophila</taxon>
        <taxon>Sophophora</taxon>
    </lineage>
</organism>
<name>UFL1_DROSI</name>
<proteinExistence type="inferred from homology"/>
<evidence type="ECO:0000250" key="1">
    <source>
        <dbReference type="UniProtKB" id="O94874"/>
    </source>
</evidence>
<evidence type="ECO:0000256" key="2">
    <source>
        <dbReference type="SAM" id="MobiDB-lite"/>
    </source>
</evidence>
<evidence type="ECO:0000305" key="3"/>
<accession>B4QYZ3</accession>